<evidence type="ECO:0000269" key="1">
    <source>
    </source>
</evidence>
<evidence type="ECO:0000305" key="2"/>
<organism>
    <name type="scientific">Myxine glutinosa</name>
    <name type="common">Atlantic hagfish</name>
    <dbReference type="NCBI Taxonomy" id="7769"/>
    <lineage>
        <taxon>Eukaryota</taxon>
        <taxon>Metazoa</taxon>
        <taxon>Chordata</taxon>
        <taxon>Craniata</taxon>
        <taxon>Vertebrata</taxon>
        <taxon>Cyclostomata</taxon>
        <taxon>Myxini</taxon>
        <taxon>Myxiniformes</taxon>
        <taxon>Myxinidae</taxon>
        <taxon>Myxininae</taxon>
        <taxon>Myxine</taxon>
    </lineage>
</organism>
<feature type="signal peptide" evidence="1">
    <location>
        <begin position="1"/>
        <end position="26"/>
    </location>
</feature>
<feature type="peptide" id="PRO_0000015852" description="Insulin B chain" evidence="1">
    <location>
        <begin position="27"/>
        <end position="57"/>
    </location>
</feature>
<feature type="propeptide" id="PRO_0000015853" description="C peptide">
    <location>
        <begin position="60"/>
        <end position="92"/>
    </location>
</feature>
<feature type="peptide" id="PRO_0000015854" description="Insulin A chain" evidence="1">
    <location>
        <begin position="95"/>
        <end position="115"/>
    </location>
</feature>
<feature type="disulfide bond" description="Interchain (between B and A chains)">
    <location>
        <begin position="33"/>
        <end position="101"/>
    </location>
</feature>
<feature type="disulfide bond" description="Interchain (between B and A chains)">
    <location>
        <begin position="45"/>
        <end position="114"/>
    </location>
</feature>
<feature type="disulfide bond">
    <location>
        <begin position="100"/>
        <end position="105"/>
    </location>
</feature>
<feature type="sequence conflict" description="In Ref. 2; AA sequence." evidence="2" ref="2">
    <original>D</original>
    <variation>N</variation>
    <location>
        <position position="109"/>
    </location>
</feature>
<feature type="sequence conflict" description="In Ref. 2; AA sequence." evidence="2" ref="2">
    <original>E</original>
    <variation>Q</variation>
    <location>
        <position position="111"/>
    </location>
</feature>
<gene>
    <name type="primary">ins</name>
</gene>
<name>INS_MYXGL</name>
<accession>P01342</accession>
<reference key="1">
    <citation type="journal article" date="1981" name="J. Biol. Chem.">
        <title>Messenger RNA sequence and primary structure of preproinsulin in a primitive vertebrate, the Atlantic hagfish.</title>
        <authorList>
            <person name="Chan S.J."/>
            <person name="Emdin S.O."/>
            <person name="Kwok S.C.M."/>
            <person name="Kramer J.M."/>
            <person name="Falkmer S."/>
            <person name="Steiner D.F."/>
        </authorList>
    </citation>
    <scope>NUCLEOTIDE SEQUENCE [MRNA]</scope>
</reference>
<reference key="2">
    <citation type="journal article" date="1975" name="J. Biol. Chem.">
        <title>The amino acid sequence of the insulin from a primitive vertebrate, the atlantic hagfish (Myxine glutinosa).</title>
        <authorList>
            <person name="Peterson J.D."/>
            <person name="Steiner D.F."/>
            <person name="Emdin S.O."/>
            <person name="Falkmer S."/>
        </authorList>
    </citation>
    <scope>PROTEIN SEQUENCE OF 27-57 AND 95-115</scope>
</reference>
<reference key="3">
    <citation type="journal article" date="1974" name="Nature">
        <title>Structural and crystallographic observations on hagfish insulin.</title>
        <authorList>
            <person name="Peterson J.D."/>
            <person name="Coulter C.L."/>
            <person name="Steiner D.F."/>
            <person name="Emdin S.O."/>
            <person name="Falkmer S."/>
        </authorList>
    </citation>
    <scope>X-RAY CRYSTALLOGRAPHY (2.5 AND 6.0 ANGSTROMS)</scope>
</reference>
<reference key="4">
    <citation type="journal article" date="1974" name="J. Mol. Biol.">
        <title>Low resolution crystal structure of hagfish insulin.</title>
        <authorList>
            <person name="Cutfield J.F."/>
            <person name="Cutfield S.M."/>
            <person name="Dodson E.J."/>
            <person name="Dodson G.G."/>
            <person name="Sabesan M.N."/>
        </authorList>
    </citation>
    <scope>X-RAY CRYSTALLOGRAPHY (6.0 ANGSTROMS)</scope>
</reference>
<sequence>MALSPFLAAVIPLVLLLSRAPPSADTRTTGHLCGKDLVNALYIACGVRGFFYDPTKMKRDTGALAAFLPLAYAEDNESQDDESIGINEVLKSKRGIVEQCCHKRCSIYDLENYCN</sequence>
<keyword id="KW-0119">Carbohydrate metabolism</keyword>
<keyword id="KW-0165">Cleavage on pair of basic residues</keyword>
<keyword id="KW-0903">Direct protein sequencing</keyword>
<keyword id="KW-1015">Disulfide bond</keyword>
<keyword id="KW-0313">Glucose metabolism</keyword>
<keyword id="KW-0372">Hormone</keyword>
<keyword id="KW-0964">Secreted</keyword>
<keyword id="KW-0732">Signal</keyword>
<protein>
    <recommendedName>
        <fullName>Insulin</fullName>
    </recommendedName>
    <component>
        <recommendedName>
            <fullName>Insulin B chain</fullName>
        </recommendedName>
    </component>
    <component>
        <recommendedName>
            <fullName>Insulin A chain</fullName>
        </recommendedName>
    </component>
</protein>
<comment type="function">
    <text>Insulin decreases blood glucose concentration. It increases cell permeability to monosaccharides, amino acids and fatty acids. It accelerates glycolysis, the pentose phosphate cycle, and glycogen synthesis in liver.</text>
</comment>
<comment type="subunit">
    <text>Heterodimer of a B chain and an A chain linked by two disulfide bonds.</text>
</comment>
<comment type="subcellular location">
    <subcellularLocation>
        <location>Secreted</location>
    </subcellularLocation>
</comment>
<comment type="similarity">
    <text evidence="2">Belongs to the insulin family.</text>
</comment>
<proteinExistence type="evidence at protein level"/>
<dbReference type="EMBL" id="V00649">
    <property type="protein sequence ID" value="CAA23993.1"/>
    <property type="molecule type" value="mRNA"/>
</dbReference>
<dbReference type="PIR" id="A01609">
    <property type="entry name" value="IPHF"/>
</dbReference>
<dbReference type="GO" id="GO:0005615">
    <property type="term" value="C:extracellular space"/>
    <property type="evidence" value="ECO:0007669"/>
    <property type="project" value="TreeGrafter"/>
</dbReference>
<dbReference type="GO" id="GO:0005179">
    <property type="term" value="F:hormone activity"/>
    <property type="evidence" value="ECO:0007669"/>
    <property type="project" value="UniProtKB-KW"/>
</dbReference>
<dbReference type="GO" id="GO:0006006">
    <property type="term" value="P:glucose metabolic process"/>
    <property type="evidence" value="ECO:0007669"/>
    <property type="project" value="UniProtKB-KW"/>
</dbReference>
<dbReference type="CDD" id="cd04367">
    <property type="entry name" value="IlGF_insulin_like"/>
    <property type="match status" value="1"/>
</dbReference>
<dbReference type="FunFam" id="1.10.100.10:FF:000003">
    <property type="entry name" value="Insulin"/>
    <property type="match status" value="1"/>
</dbReference>
<dbReference type="Gene3D" id="1.10.100.10">
    <property type="entry name" value="Insulin-like"/>
    <property type="match status" value="1"/>
</dbReference>
<dbReference type="InterPro" id="IPR004825">
    <property type="entry name" value="Insulin"/>
</dbReference>
<dbReference type="InterPro" id="IPR016179">
    <property type="entry name" value="Insulin-like"/>
</dbReference>
<dbReference type="InterPro" id="IPR036438">
    <property type="entry name" value="Insulin-like_sf"/>
</dbReference>
<dbReference type="InterPro" id="IPR022353">
    <property type="entry name" value="Insulin_CS"/>
</dbReference>
<dbReference type="InterPro" id="IPR022352">
    <property type="entry name" value="Insulin_family"/>
</dbReference>
<dbReference type="PANTHER" id="PTHR11454:SF9">
    <property type="entry name" value="INSULIN"/>
    <property type="match status" value="1"/>
</dbReference>
<dbReference type="PANTHER" id="PTHR11454">
    <property type="entry name" value="INSULIN/INSULIN GROWTH FACTOR"/>
    <property type="match status" value="1"/>
</dbReference>
<dbReference type="Pfam" id="PF00049">
    <property type="entry name" value="Insulin"/>
    <property type="match status" value="1"/>
</dbReference>
<dbReference type="PRINTS" id="PR00277">
    <property type="entry name" value="INSULIN"/>
</dbReference>
<dbReference type="PRINTS" id="PR00276">
    <property type="entry name" value="INSULINFAMLY"/>
</dbReference>
<dbReference type="SMART" id="SM00078">
    <property type="entry name" value="IlGF"/>
    <property type="match status" value="1"/>
</dbReference>
<dbReference type="SUPFAM" id="SSF56994">
    <property type="entry name" value="Insulin-like"/>
    <property type="match status" value="1"/>
</dbReference>
<dbReference type="PROSITE" id="PS00262">
    <property type="entry name" value="INSULIN"/>
    <property type="match status" value="1"/>
</dbReference>